<proteinExistence type="evidence at protein level"/>
<keyword id="KW-0002">3D-structure</keyword>
<keyword id="KW-0520">NAD</keyword>
<keyword id="KW-0560">Oxidoreductase</keyword>
<keyword id="KW-0816">Tricarboxylic acid cycle</keyword>
<feature type="chain" id="PRO_0000113313" description="Malate dehydrogenase">
    <location>
        <begin position="1"/>
        <end position="312"/>
    </location>
</feature>
<feature type="active site" description="Proton acceptor" evidence="1">
    <location>
        <position position="177"/>
    </location>
</feature>
<feature type="binding site" evidence="1">
    <location>
        <begin position="7"/>
        <end position="13"/>
    </location>
    <ligand>
        <name>NAD(+)</name>
        <dbReference type="ChEBI" id="CHEBI:57540"/>
    </ligand>
</feature>
<feature type="binding site" evidence="1">
    <location>
        <position position="34"/>
    </location>
    <ligand>
        <name>NAD(+)</name>
        <dbReference type="ChEBI" id="CHEBI:57540"/>
    </ligand>
</feature>
<feature type="binding site" evidence="1">
    <location>
        <position position="81"/>
    </location>
    <ligand>
        <name>substrate</name>
    </ligand>
</feature>
<feature type="binding site" evidence="1">
    <location>
        <position position="87"/>
    </location>
    <ligand>
        <name>substrate</name>
    </ligand>
</feature>
<feature type="binding site" evidence="1">
    <location>
        <position position="94"/>
    </location>
    <ligand>
        <name>NAD(+)</name>
        <dbReference type="ChEBI" id="CHEBI:57540"/>
    </ligand>
</feature>
<feature type="binding site" evidence="1">
    <location>
        <begin position="117"/>
        <end position="119"/>
    </location>
    <ligand>
        <name>NAD(+)</name>
        <dbReference type="ChEBI" id="CHEBI:57540"/>
    </ligand>
</feature>
<feature type="binding site" evidence="1">
    <location>
        <position position="119"/>
    </location>
    <ligand>
        <name>substrate</name>
    </ligand>
</feature>
<feature type="binding site" evidence="1">
    <location>
        <position position="153"/>
    </location>
    <ligand>
        <name>substrate</name>
    </ligand>
</feature>
<feature type="binding site" evidence="1">
    <location>
        <position position="228"/>
    </location>
    <ligand>
        <name>NAD(+)</name>
        <dbReference type="ChEBI" id="CHEBI:57540"/>
    </ligand>
</feature>
<feature type="strand" evidence="2">
    <location>
        <begin position="2"/>
        <end position="6"/>
    </location>
</feature>
<feature type="turn" evidence="2">
    <location>
        <begin position="7"/>
        <end position="9"/>
    </location>
</feature>
<feature type="helix" evidence="2">
    <location>
        <begin position="11"/>
        <end position="23"/>
    </location>
</feature>
<feature type="strand" evidence="2">
    <location>
        <begin position="28"/>
        <end position="33"/>
    </location>
</feature>
<feature type="helix" evidence="2">
    <location>
        <begin position="39"/>
        <end position="47"/>
    </location>
</feature>
<feature type="strand" evidence="2">
    <location>
        <begin position="51"/>
        <end position="58"/>
    </location>
</feature>
<feature type="helix" evidence="2">
    <location>
        <begin position="64"/>
        <end position="67"/>
    </location>
</feature>
<feature type="strand" evidence="2">
    <location>
        <begin position="71"/>
        <end position="75"/>
    </location>
</feature>
<feature type="helix" evidence="2">
    <location>
        <begin position="87"/>
        <end position="108"/>
    </location>
</feature>
<feature type="strand" evidence="2">
    <location>
        <begin position="112"/>
        <end position="116"/>
    </location>
</feature>
<feature type="strand" evidence="2">
    <location>
        <begin position="118"/>
        <end position="120"/>
    </location>
</feature>
<feature type="helix" evidence="2">
    <location>
        <begin position="121"/>
        <end position="134"/>
    </location>
</feature>
<feature type="helix" evidence="2">
    <location>
        <begin position="140"/>
        <end position="142"/>
    </location>
</feature>
<feature type="strand" evidence="2">
    <location>
        <begin position="143"/>
        <end position="145"/>
    </location>
</feature>
<feature type="helix" evidence="2">
    <location>
        <begin position="148"/>
        <end position="162"/>
    </location>
</feature>
<feature type="strand" evidence="2">
    <location>
        <begin position="173"/>
        <end position="175"/>
    </location>
</feature>
<feature type="helix" evidence="2">
    <location>
        <begin position="179"/>
        <end position="181"/>
    </location>
</feature>
<feature type="strand" evidence="2">
    <location>
        <begin position="182"/>
        <end position="184"/>
    </location>
</feature>
<feature type="helix" evidence="2">
    <location>
        <begin position="186"/>
        <end position="188"/>
    </location>
</feature>
<feature type="helix" evidence="2">
    <location>
        <begin position="197"/>
        <end position="218"/>
    </location>
</feature>
<feature type="helix" evidence="2">
    <location>
        <begin position="226"/>
        <end position="243"/>
    </location>
</feature>
<feature type="strand" evidence="2">
    <location>
        <begin position="248"/>
        <end position="255"/>
    </location>
</feature>
<feature type="strand" evidence="2">
    <location>
        <begin position="262"/>
        <end position="271"/>
    </location>
</feature>
<feature type="strand" evidence="2">
    <location>
        <begin position="274"/>
        <end position="278"/>
    </location>
</feature>
<feature type="helix" evidence="2">
    <location>
        <begin position="286"/>
        <end position="311"/>
    </location>
</feature>
<reference key="1">
    <citation type="journal article" date="2004" name="Nat. Biotechnol.">
        <title>The genome sequence of the capnophilic rumen bacterium Mannheimia succiniciproducens.</title>
        <authorList>
            <person name="Hong S.H."/>
            <person name="Kim J.S."/>
            <person name="Lee S.Y."/>
            <person name="In Y.H."/>
            <person name="Choi S.S."/>
            <person name="Rih J.-K."/>
            <person name="Kim C.H."/>
            <person name="Jeong H."/>
            <person name="Hur C.G."/>
            <person name="Kim J.J."/>
        </authorList>
    </citation>
    <scope>NUCLEOTIDE SEQUENCE [LARGE SCALE GENOMIC DNA]</scope>
    <source>
        <strain>KCTC 0769BP / MBEL55E</strain>
    </source>
</reference>
<organism>
    <name type="scientific">Mannheimia succiniciproducens (strain KCTC 0769BP / MBEL55E)</name>
    <dbReference type="NCBI Taxonomy" id="221988"/>
    <lineage>
        <taxon>Bacteria</taxon>
        <taxon>Pseudomonadati</taxon>
        <taxon>Pseudomonadota</taxon>
        <taxon>Gammaproteobacteria</taxon>
        <taxon>Pasteurellales</taxon>
        <taxon>Pasteurellaceae</taxon>
        <taxon>Basfia</taxon>
    </lineage>
</organism>
<comment type="function">
    <text evidence="1">Catalyzes the reversible oxidation of malate to oxaloacetate.</text>
</comment>
<comment type="catalytic activity">
    <reaction evidence="1">
        <text>(S)-malate + NAD(+) = oxaloacetate + NADH + H(+)</text>
        <dbReference type="Rhea" id="RHEA:21432"/>
        <dbReference type="ChEBI" id="CHEBI:15378"/>
        <dbReference type="ChEBI" id="CHEBI:15589"/>
        <dbReference type="ChEBI" id="CHEBI:16452"/>
        <dbReference type="ChEBI" id="CHEBI:57540"/>
        <dbReference type="ChEBI" id="CHEBI:57945"/>
        <dbReference type="EC" id="1.1.1.37"/>
    </reaction>
</comment>
<comment type="subunit">
    <text evidence="1">Homodimer.</text>
</comment>
<comment type="similarity">
    <text evidence="1">Belongs to the LDH/MDH superfamily. MDH type 1 family.</text>
</comment>
<protein>
    <recommendedName>
        <fullName evidence="1">Malate dehydrogenase</fullName>
        <ecNumber evidence="1">1.1.1.37</ecNumber>
    </recommendedName>
</protein>
<gene>
    <name evidence="1" type="primary">mdh</name>
    <name type="ordered locus">MS1266</name>
</gene>
<evidence type="ECO:0000255" key="1">
    <source>
        <dbReference type="HAMAP-Rule" id="MF_01516"/>
    </source>
</evidence>
<evidence type="ECO:0007829" key="2">
    <source>
        <dbReference type="PDB" id="6ITL"/>
    </source>
</evidence>
<dbReference type="EC" id="1.1.1.37" evidence="1"/>
<dbReference type="EMBL" id="AE016827">
    <property type="protein sequence ID" value="AAU37873.1"/>
    <property type="molecule type" value="Genomic_DNA"/>
</dbReference>
<dbReference type="RefSeq" id="WP_011200440.1">
    <property type="nucleotide sequence ID" value="NC_006300.1"/>
</dbReference>
<dbReference type="PDB" id="6ITL">
    <property type="method" value="X-ray"/>
    <property type="resolution" value="1.97 A"/>
    <property type="chains" value="A=1-312"/>
</dbReference>
<dbReference type="PDBsum" id="6ITL"/>
<dbReference type="SMR" id="Q65T37"/>
<dbReference type="STRING" id="221988.MS1266"/>
<dbReference type="KEGG" id="msu:MS1266"/>
<dbReference type="eggNOG" id="COG0039">
    <property type="taxonomic scope" value="Bacteria"/>
</dbReference>
<dbReference type="HOGENOM" id="CLU_047181_0_1_6"/>
<dbReference type="OrthoDB" id="9802969at2"/>
<dbReference type="Proteomes" id="UP000000607">
    <property type="component" value="Chromosome"/>
</dbReference>
<dbReference type="GO" id="GO:0005737">
    <property type="term" value="C:cytoplasm"/>
    <property type="evidence" value="ECO:0007669"/>
    <property type="project" value="TreeGrafter"/>
</dbReference>
<dbReference type="GO" id="GO:0030060">
    <property type="term" value="F:L-malate dehydrogenase (NAD+) activity"/>
    <property type="evidence" value="ECO:0007669"/>
    <property type="project" value="UniProtKB-UniRule"/>
</dbReference>
<dbReference type="GO" id="GO:0006108">
    <property type="term" value="P:malate metabolic process"/>
    <property type="evidence" value="ECO:0007669"/>
    <property type="project" value="InterPro"/>
</dbReference>
<dbReference type="GO" id="GO:0006099">
    <property type="term" value="P:tricarboxylic acid cycle"/>
    <property type="evidence" value="ECO:0007669"/>
    <property type="project" value="UniProtKB-UniRule"/>
</dbReference>
<dbReference type="CDD" id="cd01337">
    <property type="entry name" value="MDH_glyoxysomal_mitochondrial"/>
    <property type="match status" value="1"/>
</dbReference>
<dbReference type="FunFam" id="3.40.50.720:FF:000017">
    <property type="entry name" value="Malate dehydrogenase"/>
    <property type="match status" value="1"/>
</dbReference>
<dbReference type="FunFam" id="3.90.110.10:FF:000001">
    <property type="entry name" value="Malate dehydrogenase"/>
    <property type="match status" value="1"/>
</dbReference>
<dbReference type="Gene3D" id="3.90.110.10">
    <property type="entry name" value="Lactate dehydrogenase/glycoside hydrolase, family 4, C-terminal"/>
    <property type="match status" value="1"/>
</dbReference>
<dbReference type="Gene3D" id="3.40.50.720">
    <property type="entry name" value="NAD(P)-binding Rossmann-like Domain"/>
    <property type="match status" value="1"/>
</dbReference>
<dbReference type="HAMAP" id="MF_01516">
    <property type="entry name" value="Malate_dehydrog_1"/>
    <property type="match status" value="1"/>
</dbReference>
<dbReference type="InterPro" id="IPR001557">
    <property type="entry name" value="L-lactate/malate_DH"/>
</dbReference>
<dbReference type="InterPro" id="IPR022383">
    <property type="entry name" value="Lactate/malate_DH_C"/>
</dbReference>
<dbReference type="InterPro" id="IPR001236">
    <property type="entry name" value="Lactate/malate_DH_N"/>
</dbReference>
<dbReference type="InterPro" id="IPR015955">
    <property type="entry name" value="Lactate_DH/Glyco_Ohase_4_C"/>
</dbReference>
<dbReference type="InterPro" id="IPR001252">
    <property type="entry name" value="Malate_DH_AS"/>
</dbReference>
<dbReference type="InterPro" id="IPR010097">
    <property type="entry name" value="Malate_DH_type1"/>
</dbReference>
<dbReference type="InterPro" id="IPR023958">
    <property type="entry name" value="Malate_DH_type1_bac"/>
</dbReference>
<dbReference type="InterPro" id="IPR036291">
    <property type="entry name" value="NAD(P)-bd_dom_sf"/>
</dbReference>
<dbReference type="NCBIfam" id="TIGR01772">
    <property type="entry name" value="MDH_euk_gproteo"/>
    <property type="match status" value="1"/>
</dbReference>
<dbReference type="PANTHER" id="PTHR11540">
    <property type="entry name" value="MALATE AND LACTATE DEHYDROGENASE"/>
    <property type="match status" value="1"/>
</dbReference>
<dbReference type="PANTHER" id="PTHR11540:SF16">
    <property type="entry name" value="MALATE DEHYDROGENASE, MITOCHONDRIAL"/>
    <property type="match status" value="1"/>
</dbReference>
<dbReference type="Pfam" id="PF02866">
    <property type="entry name" value="Ldh_1_C"/>
    <property type="match status" value="1"/>
</dbReference>
<dbReference type="Pfam" id="PF00056">
    <property type="entry name" value="Ldh_1_N"/>
    <property type="match status" value="1"/>
</dbReference>
<dbReference type="PIRSF" id="PIRSF000102">
    <property type="entry name" value="Lac_mal_DH"/>
    <property type="match status" value="1"/>
</dbReference>
<dbReference type="SUPFAM" id="SSF56327">
    <property type="entry name" value="LDH C-terminal domain-like"/>
    <property type="match status" value="1"/>
</dbReference>
<dbReference type="SUPFAM" id="SSF51735">
    <property type="entry name" value="NAD(P)-binding Rossmann-fold domains"/>
    <property type="match status" value="1"/>
</dbReference>
<dbReference type="PROSITE" id="PS00068">
    <property type="entry name" value="MDH"/>
    <property type="match status" value="1"/>
</dbReference>
<name>MDH_MANSM</name>
<accession>Q65T37</accession>
<sequence length="312" mass="32423">MKVAVLGAAGGIGQALALLLKLQLPAGSSLSLYDVAPVTPGVAKDLSHIPTDVVVEGFAGTDPSEALKGADIVLISAGVARKPGMTRADLFGVNAGIIRSLTEKVAEQCPKACVGIITNPVNAMVAIAAEVLKKAGVYDKRKLFGITTLDILRAETFIAELKGLDPTRVTIPVIGGHSGVTILPLLSQVQNVEWSSEEEIIALTHRIQNAGTEVVEAKAGGGSATLSMAQAAARFALALVKASQGAKVVECAYVEGDGKYARFFAQPVRLGTEGVEEYLTLGKLSAFEEKALNAMLETLQGDIKSGEDFING</sequence>